<protein>
    <recommendedName>
        <fullName evidence="1">Putative septation protein SpoVG</fullName>
    </recommendedName>
</protein>
<dbReference type="EMBL" id="AE017226">
    <property type="protein sequence ID" value="AAS11856.1"/>
    <property type="molecule type" value="Genomic_DNA"/>
</dbReference>
<dbReference type="RefSeq" id="NP_971945.1">
    <property type="nucleotide sequence ID" value="NC_002967.9"/>
</dbReference>
<dbReference type="RefSeq" id="WP_002678893.1">
    <property type="nucleotide sequence ID" value="NC_002967.9"/>
</dbReference>
<dbReference type="SMR" id="Q73N17"/>
<dbReference type="STRING" id="243275.TDE_1339"/>
<dbReference type="PaxDb" id="243275-TDE_1339"/>
<dbReference type="GeneID" id="2741073"/>
<dbReference type="KEGG" id="tde:TDE_1339"/>
<dbReference type="PATRIC" id="fig|243275.7.peg.1287"/>
<dbReference type="eggNOG" id="COG2088">
    <property type="taxonomic scope" value="Bacteria"/>
</dbReference>
<dbReference type="HOGENOM" id="CLU_103669_2_1_12"/>
<dbReference type="OrthoDB" id="9796286at2"/>
<dbReference type="Proteomes" id="UP000008212">
    <property type="component" value="Chromosome"/>
</dbReference>
<dbReference type="GO" id="GO:0000917">
    <property type="term" value="P:division septum assembly"/>
    <property type="evidence" value="ECO:0007669"/>
    <property type="project" value="UniProtKB-KW"/>
</dbReference>
<dbReference type="GO" id="GO:0030435">
    <property type="term" value="P:sporulation resulting in formation of a cellular spore"/>
    <property type="evidence" value="ECO:0007669"/>
    <property type="project" value="InterPro"/>
</dbReference>
<dbReference type="Gene3D" id="3.30.1120.40">
    <property type="entry name" value="Stage V sporulation protein G"/>
    <property type="match status" value="1"/>
</dbReference>
<dbReference type="HAMAP" id="MF_00819">
    <property type="entry name" value="SpoVG"/>
    <property type="match status" value="1"/>
</dbReference>
<dbReference type="InterPro" id="IPR007170">
    <property type="entry name" value="SpoVG"/>
</dbReference>
<dbReference type="InterPro" id="IPR036751">
    <property type="entry name" value="SpoVG_sf"/>
</dbReference>
<dbReference type="NCBIfam" id="NF009749">
    <property type="entry name" value="PRK13259.1"/>
    <property type="match status" value="1"/>
</dbReference>
<dbReference type="PANTHER" id="PTHR38429">
    <property type="entry name" value="SEPTATION PROTEIN SPOVG-RELATED"/>
    <property type="match status" value="1"/>
</dbReference>
<dbReference type="PANTHER" id="PTHR38429:SF1">
    <property type="entry name" value="SEPTATION PROTEIN SPOVG-RELATED"/>
    <property type="match status" value="1"/>
</dbReference>
<dbReference type="Pfam" id="PF04026">
    <property type="entry name" value="SpoVG"/>
    <property type="match status" value="1"/>
</dbReference>
<dbReference type="SUPFAM" id="SSF160537">
    <property type="entry name" value="SpoVG-like"/>
    <property type="match status" value="1"/>
</dbReference>
<comment type="function">
    <text evidence="1">Could be involved in septation.</text>
</comment>
<comment type="similarity">
    <text evidence="1">Belongs to the SpoVG family.</text>
</comment>
<accession>Q73N17</accession>
<sequence length="93" mass="10498">MEITEVRVQRVSPGNSLKAYANITFDDCFVLHNVRVIEGNDGLYIGMPSRKLSNGEFKNIAHPITAEFREKMTKAVLEVYEKTPIMPGQEAEI</sequence>
<reference key="1">
    <citation type="journal article" date="2004" name="Proc. Natl. Acad. Sci. U.S.A.">
        <title>Comparison of the genome of the oral pathogen Treponema denticola with other spirochete genomes.</title>
        <authorList>
            <person name="Seshadri R."/>
            <person name="Myers G.S.A."/>
            <person name="Tettelin H."/>
            <person name="Eisen J.A."/>
            <person name="Heidelberg J.F."/>
            <person name="Dodson R.J."/>
            <person name="Davidsen T.M."/>
            <person name="DeBoy R.T."/>
            <person name="Fouts D.E."/>
            <person name="Haft D.H."/>
            <person name="Selengut J."/>
            <person name="Ren Q."/>
            <person name="Brinkac L.M."/>
            <person name="Madupu R."/>
            <person name="Kolonay J.F."/>
            <person name="Durkin S.A."/>
            <person name="Daugherty S.C."/>
            <person name="Shetty J."/>
            <person name="Shvartsbeyn A."/>
            <person name="Gebregeorgis E."/>
            <person name="Geer K."/>
            <person name="Tsegaye G."/>
            <person name="Malek J.A."/>
            <person name="Ayodeji B."/>
            <person name="Shatsman S."/>
            <person name="McLeod M.P."/>
            <person name="Smajs D."/>
            <person name="Howell J.K."/>
            <person name="Pal S."/>
            <person name="Amin A."/>
            <person name="Vashisth P."/>
            <person name="McNeill T.Z."/>
            <person name="Xiang Q."/>
            <person name="Sodergren E."/>
            <person name="Baca E."/>
            <person name="Weinstock G.M."/>
            <person name="Norris S.J."/>
            <person name="Fraser C.M."/>
            <person name="Paulsen I.T."/>
        </authorList>
    </citation>
    <scope>NUCLEOTIDE SEQUENCE [LARGE SCALE GENOMIC DNA]</scope>
    <source>
        <strain>ATCC 35405 / DSM 14222 / CIP 103919 / JCM 8153 / KCTC 15104</strain>
    </source>
</reference>
<gene>
    <name evidence="1" type="primary">spoVG</name>
    <name type="ordered locus">TDE_1339</name>
</gene>
<feature type="chain" id="PRO_0000157217" description="Putative septation protein SpoVG">
    <location>
        <begin position="1"/>
        <end position="93"/>
    </location>
</feature>
<organism>
    <name type="scientific">Treponema denticola (strain ATCC 35405 / DSM 14222 / CIP 103919 / JCM 8153 / KCTC 15104)</name>
    <dbReference type="NCBI Taxonomy" id="243275"/>
    <lineage>
        <taxon>Bacteria</taxon>
        <taxon>Pseudomonadati</taxon>
        <taxon>Spirochaetota</taxon>
        <taxon>Spirochaetia</taxon>
        <taxon>Spirochaetales</taxon>
        <taxon>Treponemataceae</taxon>
        <taxon>Treponema</taxon>
    </lineage>
</organism>
<proteinExistence type="inferred from homology"/>
<name>SP5G_TREDE</name>
<keyword id="KW-0131">Cell cycle</keyword>
<keyword id="KW-0132">Cell division</keyword>
<keyword id="KW-1185">Reference proteome</keyword>
<keyword id="KW-0717">Septation</keyword>
<evidence type="ECO:0000255" key="1">
    <source>
        <dbReference type="HAMAP-Rule" id="MF_00819"/>
    </source>
</evidence>